<comment type="subunit">
    <text evidence="1">Forms oligomers.</text>
</comment>
<comment type="subcellular location">
    <subcellularLocation>
        <location evidence="1">Cytoplasm</location>
        <location evidence="1">Nucleoid</location>
    </subcellularLocation>
</comment>
<comment type="similarity">
    <text evidence="1">Belongs to the MraZ family.</text>
</comment>
<organism>
    <name type="scientific">Shewanella sediminis (strain HAW-EB3)</name>
    <dbReference type="NCBI Taxonomy" id="425104"/>
    <lineage>
        <taxon>Bacteria</taxon>
        <taxon>Pseudomonadati</taxon>
        <taxon>Pseudomonadota</taxon>
        <taxon>Gammaproteobacteria</taxon>
        <taxon>Alteromonadales</taxon>
        <taxon>Shewanellaceae</taxon>
        <taxon>Shewanella</taxon>
    </lineage>
</organism>
<sequence>MFRGASAINLDTKGRIAIPKRYREPLHAEFNSQIVITVDFQSPCLLLYPFDEWSKIEAKLLLLSDTRATERAMKRLLLGYAHECELDGNGRILLPPPLRQYANLEKRAMLVGQLNKFELWDETAWQKQIEQSRETIQSEEFADNERLADFSL</sequence>
<proteinExistence type="inferred from homology"/>
<protein>
    <recommendedName>
        <fullName>Transcriptional regulator MraZ</fullName>
    </recommendedName>
</protein>
<name>MRAZ_SHESH</name>
<keyword id="KW-0963">Cytoplasm</keyword>
<keyword id="KW-0238">DNA-binding</keyword>
<keyword id="KW-1185">Reference proteome</keyword>
<keyword id="KW-0677">Repeat</keyword>
<keyword id="KW-0804">Transcription</keyword>
<keyword id="KW-0805">Transcription regulation</keyword>
<gene>
    <name evidence="1" type="primary">mraZ</name>
    <name type="ordered locus">Ssed_0401</name>
</gene>
<dbReference type="EMBL" id="CP000821">
    <property type="protein sequence ID" value="ABV35014.1"/>
    <property type="molecule type" value="Genomic_DNA"/>
</dbReference>
<dbReference type="RefSeq" id="WP_012140751.1">
    <property type="nucleotide sequence ID" value="NC_009831.1"/>
</dbReference>
<dbReference type="SMR" id="A8FQ91"/>
<dbReference type="STRING" id="425104.Ssed_0401"/>
<dbReference type="KEGG" id="sse:Ssed_0401"/>
<dbReference type="eggNOG" id="COG2001">
    <property type="taxonomic scope" value="Bacteria"/>
</dbReference>
<dbReference type="HOGENOM" id="CLU_107907_2_0_6"/>
<dbReference type="OrthoDB" id="9807753at2"/>
<dbReference type="Proteomes" id="UP000002015">
    <property type="component" value="Chromosome"/>
</dbReference>
<dbReference type="GO" id="GO:0005737">
    <property type="term" value="C:cytoplasm"/>
    <property type="evidence" value="ECO:0007669"/>
    <property type="project" value="UniProtKB-UniRule"/>
</dbReference>
<dbReference type="GO" id="GO:0009295">
    <property type="term" value="C:nucleoid"/>
    <property type="evidence" value="ECO:0007669"/>
    <property type="project" value="UniProtKB-SubCell"/>
</dbReference>
<dbReference type="GO" id="GO:0003700">
    <property type="term" value="F:DNA-binding transcription factor activity"/>
    <property type="evidence" value="ECO:0007669"/>
    <property type="project" value="UniProtKB-UniRule"/>
</dbReference>
<dbReference type="GO" id="GO:0000976">
    <property type="term" value="F:transcription cis-regulatory region binding"/>
    <property type="evidence" value="ECO:0007669"/>
    <property type="project" value="TreeGrafter"/>
</dbReference>
<dbReference type="GO" id="GO:2000143">
    <property type="term" value="P:negative regulation of DNA-templated transcription initiation"/>
    <property type="evidence" value="ECO:0007669"/>
    <property type="project" value="TreeGrafter"/>
</dbReference>
<dbReference type="CDD" id="cd16321">
    <property type="entry name" value="MraZ_C"/>
    <property type="match status" value="1"/>
</dbReference>
<dbReference type="CDD" id="cd16320">
    <property type="entry name" value="MraZ_N"/>
    <property type="match status" value="1"/>
</dbReference>
<dbReference type="Gene3D" id="3.40.1550.20">
    <property type="entry name" value="Transcriptional regulator MraZ domain"/>
    <property type="match status" value="1"/>
</dbReference>
<dbReference type="HAMAP" id="MF_01008">
    <property type="entry name" value="MraZ"/>
    <property type="match status" value="1"/>
</dbReference>
<dbReference type="InterPro" id="IPR003444">
    <property type="entry name" value="MraZ"/>
</dbReference>
<dbReference type="InterPro" id="IPR035644">
    <property type="entry name" value="MraZ_C"/>
</dbReference>
<dbReference type="InterPro" id="IPR020603">
    <property type="entry name" value="MraZ_dom"/>
</dbReference>
<dbReference type="InterPro" id="IPR035642">
    <property type="entry name" value="MraZ_N"/>
</dbReference>
<dbReference type="InterPro" id="IPR038619">
    <property type="entry name" value="MraZ_sf"/>
</dbReference>
<dbReference type="InterPro" id="IPR007159">
    <property type="entry name" value="SpoVT-AbrB_dom"/>
</dbReference>
<dbReference type="InterPro" id="IPR037914">
    <property type="entry name" value="SpoVT-AbrB_sf"/>
</dbReference>
<dbReference type="NCBIfam" id="TIGR00242">
    <property type="entry name" value="division/cell wall cluster transcriptional repressor MraZ"/>
    <property type="match status" value="1"/>
</dbReference>
<dbReference type="PANTHER" id="PTHR34701">
    <property type="entry name" value="TRANSCRIPTIONAL REGULATOR MRAZ"/>
    <property type="match status" value="1"/>
</dbReference>
<dbReference type="PANTHER" id="PTHR34701:SF1">
    <property type="entry name" value="TRANSCRIPTIONAL REGULATOR MRAZ"/>
    <property type="match status" value="1"/>
</dbReference>
<dbReference type="Pfam" id="PF02381">
    <property type="entry name" value="MraZ"/>
    <property type="match status" value="2"/>
</dbReference>
<dbReference type="SUPFAM" id="SSF89447">
    <property type="entry name" value="AbrB/MazE/MraZ-like"/>
    <property type="match status" value="1"/>
</dbReference>
<dbReference type="PROSITE" id="PS51740">
    <property type="entry name" value="SPOVT_ABRB"/>
    <property type="match status" value="2"/>
</dbReference>
<reference key="1">
    <citation type="submission" date="2007-08" db="EMBL/GenBank/DDBJ databases">
        <title>Complete sequence of Shewanella sediminis HAW-EB3.</title>
        <authorList>
            <consortium name="US DOE Joint Genome Institute"/>
            <person name="Copeland A."/>
            <person name="Lucas S."/>
            <person name="Lapidus A."/>
            <person name="Barry K."/>
            <person name="Glavina del Rio T."/>
            <person name="Dalin E."/>
            <person name="Tice H."/>
            <person name="Pitluck S."/>
            <person name="Chertkov O."/>
            <person name="Brettin T."/>
            <person name="Bruce D."/>
            <person name="Detter J.C."/>
            <person name="Han C."/>
            <person name="Schmutz J."/>
            <person name="Larimer F."/>
            <person name="Land M."/>
            <person name="Hauser L."/>
            <person name="Kyrpides N."/>
            <person name="Kim E."/>
            <person name="Zhao J.-S."/>
            <person name="Richardson P."/>
        </authorList>
    </citation>
    <scope>NUCLEOTIDE SEQUENCE [LARGE SCALE GENOMIC DNA]</scope>
    <source>
        <strain>HAW-EB3</strain>
    </source>
</reference>
<evidence type="ECO:0000255" key="1">
    <source>
        <dbReference type="HAMAP-Rule" id="MF_01008"/>
    </source>
</evidence>
<evidence type="ECO:0000255" key="2">
    <source>
        <dbReference type="PROSITE-ProRule" id="PRU01076"/>
    </source>
</evidence>
<feature type="chain" id="PRO_1000084023" description="Transcriptional regulator MraZ">
    <location>
        <begin position="1"/>
        <end position="152"/>
    </location>
</feature>
<feature type="domain" description="SpoVT-AbrB 1" evidence="2">
    <location>
        <begin position="5"/>
        <end position="52"/>
    </location>
</feature>
<feature type="domain" description="SpoVT-AbrB 2" evidence="2">
    <location>
        <begin position="81"/>
        <end position="124"/>
    </location>
</feature>
<accession>A8FQ91</accession>